<gene>
    <name type="primary">narW</name>
    <name type="ordered locus">b1466</name>
    <name type="ordered locus">JW1461</name>
</gene>
<evidence type="ECO:0000250" key="1"/>
<evidence type="ECO:0000305" key="2"/>
<name>NARW_ECOLI</name>
<reference key="1">
    <citation type="journal article" date="1990" name="Mol. Gen. Genet.">
        <title>Nitrate reductases of Escherichia coli: sequence of the second nitrate reductase and comparison with that encoded by the narGHJI operon.</title>
        <authorList>
            <person name="Blasco F."/>
            <person name="Iobbi C."/>
            <person name="Ratouchniak J."/>
            <person name="Bonnefoy V."/>
            <person name="Chippaux M."/>
        </authorList>
    </citation>
    <scope>NUCLEOTIDE SEQUENCE [GENOMIC DNA]</scope>
</reference>
<reference key="2">
    <citation type="journal article" date="1996" name="DNA Res.">
        <title>A 570-kb DNA sequence of the Escherichia coli K-12 genome corresponding to the 28.0-40.1 min region on the linkage map.</title>
        <authorList>
            <person name="Aiba H."/>
            <person name="Baba T."/>
            <person name="Fujita K."/>
            <person name="Hayashi K."/>
            <person name="Inada T."/>
            <person name="Isono K."/>
            <person name="Itoh T."/>
            <person name="Kasai H."/>
            <person name="Kashimoto K."/>
            <person name="Kimura S."/>
            <person name="Kitakawa M."/>
            <person name="Kitagawa M."/>
            <person name="Makino K."/>
            <person name="Miki T."/>
            <person name="Mizobuchi K."/>
            <person name="Mori H."/>
            <person name="Mori T."/>
            <person name="Motomura K."/>
            <person name="Nakade S."/>
            <person name="Nakamura Y."/>
            <person name="Nashimoto H."/>
            <person name="Nishio Y."/>
            <person name="Oshima T."/>
            <person name="Saito N."/>
            <person name="Sampei G."/>
            <person name="Seki Y."/>
            <person name="Sivasundaram S."/>
            <person name="Tagami H."/>
            <person name="Takeda J."/>
            <person name="Takemoto K."/>
            <person name="Takeuchi Y."/>
            <person name="Wada C."/>
            <person name="Yamamoto Y."/>
            <person name="Horiuchi T."/>
        </authorList>
    </citation>
    <scope>NUCLEOTIDE SEQUENCE [LARGE SCALE GENOMIC DNA]</scope>
    <source>
        <strain>K12 / W3110 / ATCC 27325 / DSM 5911</strain>
    </source>
</reference>
<reference key="3">
    <citation type="journal article" date="1997" name="Science">
        <title>The complete genome sequence of Escherichia coli K-12.</title>
        <authorList>
            <person name="Blattner F.R."/>
            <person name="Plunkett G. III"/>
            <person name="Bloch C.A."/>
            <person name="Perna N.T."/>
            <person name="Burland V."/>
            <person name="Riley M."/>
            <person name="Collado-Vides J."/>
            <person name="Glasner J.D."/>
            <person name="Rode C.K."/>
            <person name="Mayhew G.F."/>
            <person name="Gregor J."/>
            <person name="Davis N.W."/>
            <person name="Kirkpatrick H.A."/>
            <person name="Goeden M.A."/>
            <person name="Rose D.J."/>
            <person name="Mau B."/>
            <person name="Shao Y."/>
        </authorList>
    </citation>
    <scope>NUCLEOTIDE SEQUENCE [LARGE SCALE GENOMIC DNA]</scope>
    <source>
        <strain>K12 / MG1655 / ATCC 47076</strain>
    </source>
</reference>
<reference key="4">
    <citation type="journal article" date="2006" name="Mol. Syst. Biol.">
        <title>Highly accurate genome sequences of Escherichia coli K-12 strains MG1655 and W3110.</title>
        <authorList>
            <person name="Hayashi K."/>
            <person name="Morooka N."/>
            <person name="Yamamoto Y."/>
            <person name="Fujita K."/>
            <person name="Isono K."/>
            <person name="Choi S."/>
            <person name="Ohtsubo E."/>
            <person name="Baba T."/>
            <person name="Wanner B.L."/>
            <person name="Mori H."/>
            <person name="Horiuchi T."/>
        </authorList>
    </citation>
    <scope>NUCLEOTIDE SEQUENCE [LARGE SCALE GENOMIC DNA]</scope>
    <source>
        <strain>K12 / W3110 / ATCC 27325 / DSM 5911</strain>
    </source>
</reference>
<proteinExistence type="evidence at protein level"/>
<organism>
    <name type="scientific">Escherichia coli (strain K12)</name>
    <dbReference type="NCBI Taxonomy" id="83333"/>
    <lineage>
        <taxon>Bacteria</taxon>
        <taxon>Pseudomonadati</taxon>
        <taxon>Pseudomonadota</taxon>
        <taxon>Gammaproteobacteria</taxon>
        <taxon>Enterobacterales</taxon>
        <taxon>Enterobacteriaceae</taxon>
        <taxon>Escherichia</taxon>
    </lineage>
</organism>
<keyword id="KW-0143">Chaperone</keyword>
<keyword id="KW-0963">Cytoplasm</keyword>
<keyword id="KW-0534">Nitrate assimilation</keyword>
<keyword id="KW-1185">Reference proteome</keyword>
<sequence length="231" mass="26161">MQILKVIGLLMEYPDELLWECKEDALALIRRDAPMLTDFTHNLLNAPLLDKQAEWCEVFDRGRTTSLLLFEHVHAESRDRGQAMVDLLAEYEKVGLQLDCRELPDYLPLYLEYLSVLPDDQAKEGLLNVAPILALLGGRLKQREAPWYALFDALLQLAGSSLSSDSVTKQVNSEERDDTRQALDAVWEEEQVKFIEDNATACDSSPLNQYQRRFSQDVAPQYVDISAGGGK</sequence>
<accession>P19317</accession>
<feature type="chain" id="PRO_0000096733" description="Probable nitrate reductase molybdenum cofactor assembly chaperone NarW">
    <location>
        <begin position="1"/>
        <end position="231"/>
    </location>
</feature>
<comment type="function">
    <text evidence="1">Chaperone required for proper molybdenum cofactor insertion and final assembly of the membrane-bound respiratory nitrate reductase 2.</text>
</comment>
<comment type="interaction">
    <interactant intactId="EBI-555088">
        <id>P19317</id>
    </interactant>
    <interactant intactId="EBI-547248">
        <id>P09152</id>
        <label>narG</label>
    </interactant>
    <organismsDiffer>false</organismsDiffer>
    <experiments>9</experiments>
</comment>
<comment type="interaction">
    <interactant intactId="EBI-555088">
        <id>P19317</id>
    </interactant>
    <interactant intactId="EBI-555067">
        <id>P11349</id>
        <label>narH</label>
    </interactant>
    <organismsDiffer>false</organismsDiffer>
    <experiments>3</experiments>
</comment>
<comment type="interaction">
    <interactant intactId="EBI-555088">
        <id>P19317</id>
    </interactant>
    <interactant intactId="EBI-555059">
        <id>P19318</id>
        <label>narY</label>
    </interactant>
    <organismsDiffer>false</organismsDiffer>
    <experiments>4</experiments>
</comment>
<comment type="interaction">
    <interactant intactId="EBI-555088">
        <id>P19317</id>
    </interactant>
    <interactant intactId="EBI-547262">
        <id>P19319</id>
        <label>narZ</label>
    </interactant>
    <organismsDiffer>false</organismsDiffer>
    <experiments>3</experiments>
</comment>
<comment type="subcellular location">
    <subcellularLocation>
        <location evidence="1">Cytoplasm</location>
    </subcellularLocation>
</comment>
<comment type="similarity">
    <text evidence="2">Belongs to the NarJ/NarW family.</text>
</comment>
<protein>
    <recommendedName>
        <fullName>Probable nitrate reductase molybdenum cofactor assembly chaperone NarW</fullName>
    </recommendedName>
    <alternativeName>
        <fullName>Redox enzyme maturation protein NarW</fullName>
    </alternativeName>
</protein>
<dbReference type="EMBL" id="X17110">
    <property type="protein sequence ID" value="CAA34966.1"/>
    <property type="molecule type" value="Genomic_DNA"/>
</dbReference>
<dbReference type="EMBL" id="U00096">
    <property type="protein sequence ID" value="AAC74548.1"/>
    <property type="molecule type" value="Genomic_DNA"/>
</dbReference>
<dbReference type="EMBL" id="AP009048">
    <property type="protein sequence ID" value="BAA15103.1"/>
    <property type="molecule type" value="Genomic_DNA"/>
</dbReference>
<dbReference type="PIR" id="S11429">
    <property type="entry name" value="S11429"/>
</dbReference>
<dbReference type="RefSeq" id="NP_415983.1">
    <property type="nucleotide sequence ID" value="NC_000913.3"/>
</dbReference>
<dbReference type="RefSeq" id="WP_001166353.1">
    <property type="nucleotide sequence ID" value="NZ_STEB01000053.1"/>
</dbReference>
<dbReference type="SMR" id="P19317"/>
<dbReference type="BioGRID" id="4260181">
    <property type="interactions" value="195"/>
</dbReference>
<dbReference type="BioGRID" id="850393">
    <property type="interactions" value="7"/>
</dbReference>
<dbReference type="DIP" id="DIP-10321N"/>
<dbReference type="FunCoup" id="P19317">
    <property type="interactions" value="183"/>
</dbReference>
<dbReference type="IntAct" id="P19317">
    <property type="interactions" value="8"/>
</dbReference>
<dbReference type="STRING" id="511145.b1466"/>
<dbReference type="PaxDb" id="511145-b1466"/>
<dbReference type="EnsemblBacteria" id="AAC74548">
    <property type="protein sequence ID" value="AAC74548"/>
    <property type="gene ID" value="b1466"/>
</dbReference>
<dbReference type="GeneID" id="75203170"/>
<dbReference type="GeneID" id="946032"/>
<dbReference type="KEGG" id="ecj:JW1461"/>
<dbReference type="KEGG" id="eco:b1466"/>
<dbReference type="KEGG" id="ecoc:C3026_08510"/>
<dbReference type="PATRIC" id="fig|1411691.4.peg.802"/>
<dbReference type="EchoBASE" id="EB0639"/>
<dbReference type="eggNOG" id="COG2180">
    <property type="taxonomic scope" value="Bacteria"/>
</dbReference>
<dbReference type="HOGENOM" id="CLU_084469_0_0_6"/>
<dbReference type="InParanoid" id="P19317"/>
<dbReference type="OMA" id="LRFKHAY"/>
<dbReference type="OrthoDB" id="8478585at2"/>
<dbReference type="PhylomeDB" id="P19317"/>
<dbReference type="BioCyc" id="EcoCyc:NARW-MONOMER"/>
<dbReference type="PHI-base" id="PHI:10518"/>
<dbReference type="PRO" id="PR:P19317"/>
<dbReference type="Proteomes" id="UP000000625">
    <property type="component" value="Chromosome"/>
</dbReference>
<dbReference type="GO" id="GO:0005737">
    <property type="term" value="C:cytoplasm"/>
    <property type="evidence" value="ECO:0007669"/>
    <property type="project" value="UniProtKB-SubCell"/>
</dbReference>
<dbReference type="GO" id="GO:0016530">
    <property type="term" value="F:metallochaperone activity"/>
    <property type="evidence" value="ECO:0000318"/>
    <property type="project" value="GO_Central"/>
</dbReference>
<dbReference type="GO" id="GO:0051082">
    <property type="term" value="F:unfolded protein binding"/>
    <property type="evidence" value="ECO:0007669"/>
    <property type="project" value="InterPro"/>
</dbReference>
<dbReference type="GO" id="GO:0051131">
    <property type="term" value="P:chaperone-mediated protein complex assembly"/>
    <property type="evidence" value="ECO:0000318"/>
    <property type="project" value="GO_Central"/>
</dbReference>
<dbReference type="GO" id="GO:0042128">
    <property type="term" value="P:nitrate assimilation"/>
    <property type="evidence" value="ECO:0000318"/>
    <property type="project" value="GO_Central"/>
</dbReference>
<dbReference type="Gene3D" id="1.10.3480.10">
    <property type="entry name" value="TorD-like"/>
    <property type="match status" value="1"/>
</dbReference>
<dbReference type="InterPro" id="IPR020945">
    <property type="entry name" value="DMSO/NO3_reduct_chaperone"/>
</dbReference>
<dbReference type="InterPro" id="IPR003765">
    <property type="entry name" value="NO3_reductase_chaperone_NarJ"/>
</dbReference>
<dbReference type="InterPro" id="IPR036411">
    <property type="entry name" value="TorD-like_sf"/>
</dbReference>
<dbReference type="NCBIfam" id="TIGR00684">
    <property type="entry name" value="narJ"/>
    <property type="match status" value="1"/>
</dbReference>
<dbReference type="NCBIfam" id="NF011628">
    <property type="entry name" value="PRK15054.1"/>
    <property type="match status" value="1"/>
</dbReference>
<dbReference type="PANTHER" id="PTHR43680">
    <property type="entry name" value="NITRATE REDUCTASE MOLYBDENUM COFACTOR ASSEMBLY CHAPERONE"/>
    <property type="match status" value="1"/>
</dbReference>
<dbReference type="PANTHER" id="PTHR43680:SF4">
    <property type="entry name" value="NITRATE REDUCTASE MOLYBDENUM COFACTOR ASSEMBLY CHAPERONE NARW-RELATED"/>
    <property type="match status" value="1"/>
</dbReference>
<dbReference type="Pfam" id="PF02613">
    <property type="entry name" value="Nitrate_red_del"/>
    <property type="match status" value="1"/>
</dbReference>
<dbReference type="SUPFAM" id="SSF89155">
    <property type="entry name" value="TorD-like"/>
    <property type="match status" value="1"/>
</dbReference>